<reference key="1">
    <citation type="journal article" date="2008" name="Proc. Natl. Acad. Sci. U.S.A.">
        <title>The genome of Cyanothece 51142, a unicellular diazotrophic cyanobacterium important in the marine nitrogen cycle.</title>
        <authorList>
            <person name="Welsh E.A."/>
            <person name="Liberton M."/>
            <person name="Stoeckel J."/>
            <person name="Loh T."/>
            <person name="Elvitigala T."/>
            <person name="Wang C."/>
            <person name="Wollam A."/>
            <person name="Fulton R.S."/>
            <person name="Clifton S.W."/>
            <person name="Jacobs J.M."/>
            <person name="Aurora R."/>
            <person name="Ghosh B.K."/>
            <person name="Sherman L.A."/>
            <person name="Smith R.D."/>
            <person name="Wilson R.K."/>
            <person name="Pakrasi H.B."/>
        </authorList>
    </citation>
    <scope>NUCLEOTIDE SEQUENCE [LARGE SCALE GENOMIC DNA]</scope>
    <source>
        <strain>ATCC 51142 / BH68</strain>
    </source>
</reference>
<feature type="chain" id="PRO_0000347578" description="Alanine--tRNA ligase">
    <location>
        <begin position="1"/>
        <end position="879"/>
    </location>
</feature>
<feature type="binding site" evidence="1">
    <location>
        <position position="564"/>
    </location>
    <ligand>
        <name>Zn(2+)</name>
        <dbReference type="ChEBI" id="CHEBI:29105"/>
    </ligand>
</feature>
<feature type="binding site" evidence="1">
    <location>
        <position position="568"/>
    </location>
    <ligand>
        <name>Zn(2+)</name>
        <dbReference type="ChEBI" id="CHEBI:29105"/>
    </ligand>
</feature>
<feature type="binding site" evidence="1">
    <location>
        <position position="666"/>
    </location>
    <ligand>
        <name>Zn(2+)</name>
        <dbReference type="ChEBI" id="CHEBI:29105"/>
    </ligand>
</feature>
<feature type="binding site" evidence="1">
    <location>
        <position position="670"/>
    </location>
    <ligand>
        <name>Zn(2+)</name>
        <dbReference type="ChEBI" id="CHEBI:29105"/>
    </ligand>
</feature>
<evidence type="ECO:0000255" key="1">
    <source>
        <dbReference type="HAMAP-Rule" id="MF_00036"/>
    </source>
</evidence>
<keyword id="KW-0030">Aminoacyl-tRNA synthetase</keyword>
<keyword id="KW-0067">ATP-binding</keyword>
<keyword id="KW-0963">Cytoplasm</keyword>
<keyword id="KW-0436">Ligase</keyword>
<keyword id="KW-0479">Metal-binding</keyword>
<keyword id="KW-0547">Nucleotide-binding</keyword>
<keyword id="KW-0648">Protein biosynthesis</keyword>
<keyword id="KW-1185">Reference proteome</keyword>
<keyword id="KW-0694">RNA-binding</keyword>
<keyword id="KW-0820">tRNA-binding</keyword>
<keyword id="KW-0862">Zinc</keyword>
<proteinExistence type="inferred from homology"/>
<accession>B1WYQ5</accession>
<name>SYA_CROS5</name>
<gene>
    <name evidence="1" type="primary">alaS</name>
    <name type="ordered locus">cce_1722</name>
</gene>
<organism>
    <name type="scientific">Crocosphaera subtropica (strain ATCC 51142 / BH68)</name>
    <name type="common">Cyanothece sp. (strain ATCC 51142)</name>
    <dbReference type="NCBI Taxonomy" id="43989"/>
    <lineage>
        <taxon>Bacteria</taxon>
        <taxon>Bacillati</taxon>
        <taxon>Cyanobacteriota</taxon>
        <taxon>Cyanophyceae</taxon>
        <taxon>Oscillatoriophycideae</taxon>
        <taxon>Chroococcales</taxon>
        <taxon>Aphanothecaceae</taxon>
        <taxon>Crocosphaera</taxon>
        <taxon>Crocosphaera subtropica</taxon>
    </lineage>
</organism>
<dbReference type="EC" id="6.1.1.7" evidence="1"/>
<dbReference type="EMBL" id="CP000806">
    <property type="protein sequence ID" value="ACB51072.1"/>
    <property type="molecule type" value="Genomic_DNA"/>
</dbReference>
<dbReference type="RefSeq" id="WP_009545540.1">
    <property type="nucleotide sequence ID" value="NC_010546.1"/>
</dbReference>
<dbReference type="SMR" id="B1WYQ5"/>
<dbReference type="STRING" id="43989.cce_1722"/>
<dbReference type="KEGG" id="cyt:cce_1722"/>
<dbReference type="eggNOG" id="COG0013">
    <property type="taxonomic scope" value="Bacteria"/>
</dbReference>
<dbReference type="HOGENOM" id="CLU_004485_1_1_3"/>
<dbReference type="OrthoDB" id="9803884at2"/>
<dbReference type="Proteomes" id="UP000001203">
    <property type="component" value="Chromosome circular"/>
</dbReference>
<dbReference type="GO" id="GO:0005829">
    <property type="term" value="C:cytosol"/>
    <property type="evidence" value="ECO:0007669"/>
    <property type="project" value="TreeGrafter"/>
</dbReference>
<dbReference type="GO" id="GO:0004813">
    <property type="term" value="F:alanine-tRNA ligase activity"/>
    <property type="evidence" value="ECO:0007669"/>
    <property type="project" value="UniProtKB-UniRule"/>
</dbReference>
<dbReference type="GO" id="GO:0002161">
    <property type="term" value="F:aminoacyl-tRNA deacylase activity"/>
    <property type="evidence" value="ECO:0007669"/>
    <property type="project" value="TreeGrafter"/>
</dbReference>
<dbReference type="GO" id="GO:0005524">
    <property type="term" value="F:ATP binding"/>
    <property type="evidence" value="ECO:0007669"/>
    <property type="project" value="UniProtKB-UniRule"/>
</dbReference>
<dbReference type="GO" id="GO:0000049">
    <property type="term" value="F:tRNA binding"/>
    <property type="evidence" value="ECO:0007669"/>
    <property type="project" value="UniProtKB-KW"/>
</dbReference>
<dbReference type="GO" id="GO:0008270">
    <property type="term" value="F:zinc ion binding"/>
    <property type="evidence" value="ECO:0007669"/>
    <property type="project" value="UniProtKB-UniRule"/>
</dbReference>
<dbReference type="GO" id="GO:0006419">
    <property type="term" value="P:alanyl-tRNA aminoacylation"/>
    <property type="evidence" value="ECO:0007669"/>
    <property type="project" value="UniProtKB-UniRule"/>
</dbReference>
<dbReference type="CDD" id="cd00673">
    <property type="entry name" value="AlaRS_core"/>
    <property type="match status" value="1"/>
</dbReference>
<dbReference type="FunFam" id="3.10.310.40:FF:000001">
    <property type="entry name" value="Alanine--tRNA ligase"/>
    <property type="match status" value="1"/>
</dbReference>
<dbReference type="FunFam" id="3.30.54.20:FF:000001">
    <property type="entry name" value="Alanine--tRNA ligase"/>
    <property type="match status" value="1"/>
</dbReference>
<dbReference type="FunFam" id="3.30.930.10:FF:000004">
    <property type="entry name" value="Alanine--tRNA ligase"/>
    <property type="match status" value="1"/>
</dbReference>
<dbReference type="FunFam" id="3.30.980.10:FF:000004">
    <property type="entry name" value="Alanine--tRNA ligase, cytoplasmic"/>
    <property type="match status" value="1"/>
</dbReference>
<dbReference type="FunFam" id="2.40.30.130:FF:000007">
    <property type="entry name" value="Probable alanine--tRNA ligase, chloroplastic"/>
    <property type="match status" value="1"/>
</dbReference>
<dbReference type="Gene3D" id="2.40.30.130">
    <property type="match status" value="1"/>
</dbReference>
<dbReference type="Gene3D" id="3.10.310.40">
    <property type="match status" value="1"/>
</dbReference>
<dbReference type="Gene3D" id="3.30.54.20">
    <property type="match status" value="1"/>
</dbReference>
<dbReference type="Gene3D" id="6.10.250.550">
    <property type="match status" value="1"/>
</dbReference>
<dbReference type="Gene3D" id="3.30.930.10">
    <property type="entry name" value="Bira Bifunctional Protein, Domain 2"/>
    <property type="match status" value="1"/>
</dbReference>
<dbReference type="Gene3D" id="3.30.980.10">
    <property type="entry name" value="Threonyl-trna Synthetase, Chain A, domain 2"/>
    <property type="match status" value="1"/>
</dbReference>
<dbReference type="HAMAP" id="MF_00036_B">
    <property type="entry name" value="Ala_tRNA_synth_B"/>
    <property type="match status" value="1"/>
</dbReference>
<dbReference type="InterPro" id="IPR045864">
    <property type="entry name" value="aa-tRNA-synth_II/BPL/LPL"/>
</dbReference>
<dbReference type="InterPro" id="IPR002318">
    <property type="entry name" value="Ala-tRNA-lgiase_IIc"/>
</dbReference>
<dbReference type="InterPro" id="IPR018162">
    <property type="entry name" value="Ala-tRNA-ligase_IIc_anticod-bd"/>
</dbReference>
<dbReference type="InterPro" id="IPR018165">
    <property type="entry name" value="Ala-tRNA-synth_IIc_core"/>
</dbReference>
<dbReference type="InterPro" id="IPR018164">
    <property type="entry name" value="Ala-tRNA-synth_IIc_N"/>
</dbReference>
<dbReference type="InterPro" id="IPR050058">
    <property type="entry name" value="Ala-tRNA_ligase"/>
</dbReference>
<dbReference type="InterPro" id="IPR023033">
    <property type="entry name" value="Ala_tRNA_ligase_euk/bac"/>
</dbReference>
<dbReference type="InterPro" id="IPR003156">
    <property type="entry name" value="DHHA1_dom"/>
</dbReference>
<dbReference type="InterPro" id="IPR018163">
    <property type="entry name" value="Thr/Ala-tRNA-synth_IIc_edit"/>
</dbReference>
<dbReference type="InterPro" id="IPR009000">
    <property type="entry name" value="Transl_B-barrel_sf"/>
</dbReference>
<dbReference type="InterPro" id="IPR012947">
    <property type="entry name" value="tRNA_SAD"/>
</dbReference>
<dbReference type="NCBIfam" id="TIGR00344">
    <property type="entry name" value="alaS"/>
    <property type="match status" value="1"/>
</dbReference>
<dbReference type="PANTHER" id="PTHR11777:SF9">
    <property type="entry name" value="ALANINE--TRNA LIGASE, CYTOPLASMIC"/>
    <property type="match status" value="1"/>
</dbReference>
<dbReference type="PANTHER" id="PTHR11777">
    <property type="entry name" value="ALANYL-TRNA SYNTHETASE"/>
    <property type="match status" value="1"/>
</dbReference>
<dbReference type="Pfam" id="PF02272">
    <property type="entry name" value="DHHA1"/>
    <property type="match status" value="1"/>
</dbReference>
<dbReference type="Pfam" id="PF01411">
    <property type="entry name" value="tRNA-synt_2c"/>
    <property type="match status" value="1"/>
</dbReference>
<dbReference type="Pfam" id="PF07973">
    <property type="entry name" value="tRNA_SAD"/>
    <property type="match status" value="1"/>
</dbReference>
<dbReference type="PRINTS" id="PR00980">
    <property type="entry name" value="TRNASYNTHALA"/>
</dbReference>
<dbReference type="SMART" id="SM00863">
    <property type="entry name" value="tRNA_SAD"/>
    <property type="match status" value="1"/>
</dbReference>
<dbReference type="SUPFAM" id="SSF55681">
    <property type="entry name" value="Class II aaRS and biotin synthetases"/>
    <property type="match status" value="1"/>
</dbReference>
<dbReference type="SUPFAM" id="SSF101353">
    <property type="entry name" value="Putative anticodon-binding domain of alanyl-tRNA synthetase (AlaRS)"/>
    <property type="match status" value="1"/>
</dbReference>
<dbReference type="SUPFAM" id="SSF55186">
    <property type="entry name" value="ThrRS/AlaRS common domain"/>
    <property type="match status" value="1"/>
</dbReference>
<dbReference type="SUPFAM" id="SSF50447">
    <property type="entry name" value="Translation proteins"/>
    <property type="match status" value="1"/>
</dbReference>
<dbReference type="PROSITE" id="PS50860">
    <property type="entry name" value="AA_TRNA_LIGASE_II_ALA"/>
    <property type="match status" value="1"/>
</dbReference>
<protein>
    <recommendedName>
        <fullName evidence="1">Alanine--tRNA ligase</fullName>
        <ecNumber evidence="1">6.1.1.7</ecNumber>
    </recommendedName>
    <alternativeName>
        <fullName evidence="1">Alanyl-tRNA synthetase</fullName>
        <shortName evidence="1">AlaRS</shortName>
    </alternativeName>
</protein>
<comment type="function">
    <text evidence="1">Catalyzes the attachment of alanine to tRNA(Ala) in a two-step reaction: alanine is first activated by ATP to form Ala-AMP and then transferred to the acceptor end of tRNA(Ala). Also edits incorrectly charged Ser-tRNA(Ala) and Gly-tRNA(Ala) via its editing domain.</text>
</comment>
<comment type="catalytic activity">
    <reaction evidence="1">
        <text>tRNA(Ala) + L-alanine + ATP = L-alanyl-tRNA(Ala) + AMP + diphosphate</text>
        <dbReference type="Rhea" id="RHEA:12540"/>
        <dbReference type="Rhea" id="RHEA-COMP:9657"/>
        <dbReference type="Rhea" id="RHEA-COMP:9923"/>
        <dbReference type="ChEBI" id="CHEBI:30616"/>
        <dbReference type="ChEBI" id="CHEBI:33019"/>
        <dbReference type="ChEBI" id="CHEBI:57972"/>
        <dbReference type="ChEBI" id="CHEBI:78442"/>
        <dbReference type="ChEBI" id="CHEBI:78497"/>
        <dbReference type="ChEBI" id="CHEBI:456215"/>
        <dbReference type="EC" id="6.1.1.7"/>
    </reaction>
</comment>
<comment type="cofactor">
    <cofactor evidence="1">
        <name>Zn(2+)</name>
        <dbReference type="ChEBI" id="CHEBI:29105"/>
    </cofactor>
    <text evidence="1">Binds 1 zinc ion per subunit.</text>
</comment>
<comment type="subcellular location">
    <subcellularLocation>
        <location evidence="1">Cytoplasm</location>
    </subcellularLocation>
</comment>
<comment type="domain">
    <text evidence="1">Consists of three domains; the N-terminal catalytic domain, the editing domain and the C-terminal C-Ala domain. The editing domain removes incorrectly charged amino acids, while the C-Ala domain, along with tRNA(Ala), serves as a bridge to cooperatively bring together the editing and aminoacylation centers thus stimulating deacylation of misacylated tRNAs.</text>
</comment>
<comment type="similarity">
    <text evidence="1">Belongs to the class-II aminoacyl-tRNA synthetase family.</text>
</comment>
<sequence>MTTTAPFLTGNQIRDRFLQFYAQHNHQILPSASLVPEDPTVLLTIAGMLPFKPIFLGQKQPDFPRATTSQKCIRTNDIENVGRTARHHTFFEMLGNFSFGDYFKEQAIKWAWELSTKVYRLPPENIVVSVFEKDDEAFKLWEEMIGIPPQRIKRMGEKDNFWKAGPTGPCGPCSELYYDFHPELGEDNIDLEDDSRFIEFYNLVFMEYNRDAEGNLAPLQNKNIDTGMGLERMAQILQKVPNNYETDLIFPIIETAANIANIDYQKATEKTKVSLKVIGDHVRSVVHMIADGITASNTDRGYVLRRLIRRVVRHGRLIGIEGQFIKQVAETAIELSENAYPQVRERESFIKGELEREETAFLKTLERGEKLLAEIIEKTETQGQISGVDAFTLYDTYGFPLELTQEIAEESNLTVNIEEFEAEMRQQQERSKAAHETIDLTVQGSLDKLAEHIHPTAFLGYTDLQLTAKVEAVLIQGKTVDTAEAGSEVQIVLDQTPFYGESGGQIGDRGFLTGENLVIRVEDVQKESGIFVHFGRVERGSVSVNDQVTATIDRACRRQVQANHTATHLLQAALKKVVDKSISQAGSLVAFDRLRFDFNCPRAVTSEELQEIEDLINTWIAEAHETEIAVMPIETAKEKGAIAMFGEKYGSEVRVIDVPGVSMELCGGTHVKNTAEIGLFKIMSESGISSGVRRIEAVAGPAVLEYLKVRETVVKDLCDRFKIKPEEISDRITTLQSELKTTQKELEAVKQDLAVAKSDQLLTEAESIGEFKLLVSDMGEMDAKALQTAAERLQQKLGEGAVILGSIPSEGKVSLVAAFSKKVNQEKQLQAGKFIGQIAKICGGGGGGRPNLAQAGGREPSKLSEALLTAKEQLTESLK</sequence>